<sequence length="192" mass="21585">MASRGKTETNKLKVNIEEQLNRLLAQLQDIEELKEDITQEEYDETKKDTLEQMKEFEQSLKKMMSGDMTLVSELGGVQLAIQAAVSQAFKTPEVIKLFAKKDQNSLRTKLGNIQRDVQLGKISKDAYIDQSVEILAALKKLDFVLSPEEEAFLEKHKSRSMSEFEKVSSNIGQGTKENILSSAASQIKNASK</sequence>
<evidence type="ECO:0000255" key="1"/>
<evidence type="ECO:0000305" key="2"/>
<name>LZIC_DICDI</name>
<organism>
    <name type="scientific">Dictyostelium discoideum</name>
    <name type="common">Social amoeba</name>
    <dbReference type="NCBI Taxonomy" id="44689"/>
    <lineage>
        <taxon>Eukaryota</taxon>
        <taxon>Amoebozoa</taxon>
        <taxon>Evosea</taxon>
        <taxon>Eumycetozoa</taxon>
        <taxon>Dictyostelia</taxon>
        <taxon>Dictyosteliales</taxon>
        <taxon>Dictyosteliaceae</taxon>
        <taxon>Dictyostelium</taxon>
    </lineage>
</organism>
<keyword id="KW-0175">Coiled coil</keyword>
<keyword id="KW-1185">Reference proteome</keyword>
<comment type="similarity">
    <text evidence="2">Belongs to the CTNNBIP1 family.</text>
</comment>
<reference key="1">
    <citation type="journal article" date="2005" name="Nature">
        <title>The genome of the social amoeba Dictyostelium discoideum.</title>
        <authorList>
            <person name="Eichinger L."/>
            <person name="Pachebat J.A."/>
            <person name="Gloeckner G."/>
            <person name="Rajandream M.A."/>
            <person name="Sucgang R."/>
            <person name="Berriman M."/>
            <person name="Song J."/>
            <person name="Olsen R."/>
            <person name="Szafranski K."/>
            <person name="Xu Q."/>
            <person name="Tunggal B."/>
            <person name="Kummerfeld S."/>
            <person name="Madera M."/>
            <person name="Konfortov B.A."/>
            <person name="Rivero F."/>
            <person name="Bankier A.T."/>
            <person name="Lehmann R."/>
            <person name="Hamlin N."/>
            <person name="Davies R."/>
            <person name="Gaudet P."/>
            <person name="Fey P."/>
            <person name="Pilcher K."/>
            <person name="Chen G."/>
            <person name="Saunders D."/>
            <person name="Sodergren E.J."/>
            <person name="Davis P."/>
            <person name="Kerhornou A."/>
            <person name="Nie X."/>
            <person name="Hall N."/>
            <person name="Anjard C."/>
            <person name="Hemphill L."/>
            <person name="Bason N."/>
            <person name="Farbrother P."/>
            <person name="Desany B."/>
            <person name="Just E."/>
            <person name="Morio T."/>
            <person name="Rost R."/>
            <person name="Churcher C.M."/>
            <person name="Cooper J."/>
            <person name="Haydock S."/>
            <person name="van Driessche N."/>
            <person name="Cronin A."/>
            <person name="Goodhead I."/>
            <person name="Muzny D.M."/>
            <person name="Mourier T."/>
            <person name="Pain A."/>
            <person name="Lu M."/>
            <person name="Harper D."/>
            <person name="Lindsay R."/>
            <person name="Hauser H."/>
            <person name="James K.D."/>
            <person name="Quiles M."/>
            <person name="Madan Babu M."/>
            <person name="Saito T."/>
            <person name="Buchrieser C."/>
            <person name="Wardroper A."/>
            <person name="Felder M."/>
            <person name="Thangavelu M."/>
            <person name="Johnson D."/>
            <person name="Knights A."/>
            <person name="Loulseged H."/>
            <person name="Mungall K.L."/>
            <person name="Oliver K."/>
            <person name="Price C."/>
            <person name="Quail M.A."/>
            <person name="Urushihara H."/>
            <person name="Hernandez J."/>
            <person name="Rabbinowitsch E."/>
            <person name="Steffen D."/>
            <person name="Sanders M."/>
            <person name="Ma J."/>
            <person name="Kohara Y."/>
            <person name="Sharp S."/>
            <person name="Simmonds M.N."/>
            <person name="Spiegler S."/>
            <person name="Tivey A."/>
            <person name="Sugano S."/>
            <person name="White B."/>
            <person name="Walker D."/>
            <person name="Woodward J.R."/>
            <person name="Winckler T."/>
            <person name="Tanaka Y."/>
            <person name="Shaulsky G."/>
            <person name="Schleicher M."/>
            <person name="Weinstock G.M."/>
            <person name="Rosenthal A."/>
            <person name="Cox E.C."/>
            <person name="Chisholm R.L."/>
            <person name="Gibbs R.A."/>
            <person name="Loomis W.F."/>
            <person name="Platzer M."/>
            <person name="Kay R.R."/>
            <person name="Williams J.G."/>
            <person name="Dear P.H."/>
            <person name="Noegel A.A."/>
            <person name="Barrell B.G."/>
            <person name="Kuspa A."/>
        </authorList>
    </citation>
    <scope>NUCLEOTIDE SEQUENCE [LARGE SCALE GENOMIC DNA]</scope>
    <source>
        <strain>AX4</strain>
    </source>
</reference>
<dbReference type="EMBL" id="AAFI02000125">
    <property type="protein sequence ID" value="EAL63033.1"/>
    <property type="molecule type" value="Genomic_DNA"/>
</dbReference>
<dbReference type="RefSeq" id="XP_636543.1">
    <property type="nucleotide sequence ID" value="XM_631451.1"/>
</dbReference>
<dbReference type="SMR" id="Q54ID4"/>
<dbReference type="FunCoup" id="Q54ID4">
    <property type="interactions" value="7"/>
</dbReference>
<dbReference type="STRING" id="44689.Q54ID4"/>
<dbReference type="PaxDb" id="44689-DDB0266467"/>
<dbReference type="EnsemblProtists" id="EAL63033">
    <property type="protein sequence ID" value="EAL63033"/>
    <property type="gene ID" value="DDB_G0288823"/>
</dbReference>
<dbReference type="GeneID" id="8626828"/>
<dbReference type="KEGG" id="ddi:DDB_G0288823"/>
<dbReference type="dictyBase" id="DDB_G0288823">
    <property type="gene designation" value="lzic"/>
</dbReference>
<dbReference type="VEuPathDB" id="AmoebaDB:DDB_G0288823"/>
<dbReference type="eggNOG" id="ENOG502QPUB">
    <property type="taxonomic scope" value="Eukaryota"/>
</dbReference>
<dbReference type="HOGENOM" id="CLU_091171_0_0_1"/>
<dbReference type="InParanoid" id="Q54ID4"/>
<dbReference type="OMA" id="TKMMAGN"/>
<dbReference type="PhylomeDB" id="Q54ID4"/>
<dbReference type="PRO" id="PR:Q54ID4"/>
<dbReference type="Proteomes" id="UP000002195">
    <property type="component" value="Chromosome 5"/>
</dbReference>
<dbReference type="GO" id="GO:0008013">
    <property type="term" value="F:beta-catenin binding"/>
    <property type="evidence" value="ECO:0007669"/>
    <property type="project" value="InterPro"/>
</dbReference>
<dbReference type="Gene3D" id="1.10.10.490">
    <property type="entry name" value="Beta-catenin-interacting ICAT"/>
    <property type="match status" value="1"/>
</dbReference>
<dbReference type="InterPro" id="IPR009428">
    <property type="entry name" value="ICAT_dom"/>
</dbReference>
<dbReference type="InterPro" id="IPR036911">
    <property type="entry name" value="ICAT_sf"/>
</dbReference>
<dbReference type="InterPro" id="IPR040065">
    <property type="entry name" value="LZIC"/>
</dbReference>
<dbReference type="PANTHER" id="PTHR16505">
    <property type="entry name" value="PROTEIN LZIC"/>
    <property type="match status" value="1"/>
</dbReference>
<dbReference type="PANTHER" id="PTHR16505:SF8">
    <property type="entry name" value="PROTEIN LZIC"/>
    <property type="match status" value="1"/>
</dbReference>
<dbReference type="Pfam" id="PF06384">
    <property type="entry name" value="ICAT"/>
    <property type="match status" value="1"/>
</dbReference>
<dbReference type="SUPFAM" id="SSF81730">
    <property type="entry name" value="beta-catenin-interacting protein ICAT"/>
    <property type="match status" value="1"/>
</dbReference>
<feature type="chain" id="PRO_0000327789" description="Protein LZIC">
    <location>
        <begin position="1"/>
        <end position="192"/>
    </location>
</feature>
<feature type="coiled-coil region" evidence="1">
    <location>
        <begin position="6"/>
        <end position="65"/>
    </location>
</feature>
<accession>Q54ID4</accession>
<protein>
    <recommendedName>
        <fullName>Protein LZIC</fullName>
    </recommendedName>
    <alternativeName>
        <fullName>Leucine zipper and CTNNBIP1 domain-containing protein</fullName>
    </alternativeName>
    <alternativeName>
        <fullName>Leucine zipper and ICAT homologous domain-containing protein</fullName>
    </alternativeName>
</protein>
<proteinExistence type="evidence at transcript level"/>
<gene>
    <name type="primary">lzic</name>
    <name type="ORF">DDB_G0288823</name>
</gene>